<accession>Q06176</accession>
<name>LDHC_FUNHE</name>
<keyword id="KW-0963">Cytoplasm</keyword>
<keyword id="KW-0520">NAD</keyword>
<keyword id="KW-0560">Oxidoreductase</keyword>
<sequence>MASVLHKLITPLACSSPEPPRNKVTVVGVGQVGMACAVTILLRELADELALVDVVEDKVKGEMMDLQHGSLFLKTPKIVADKDYSVTSNSRIVVVTAGVRQQEGERRLNLDQRNVNIFKHIIPLIVRHSPDCIIIVVSNPVDVLTYVTWKLSGLPMHRVIGSGTNLDSARFRFLMADKLGIHSSSFNGWILGEHGDTSVPVWSGTNVAGVNLQTLNPNIGTDFDEENWKETHKMVVDSAYEVIKLKGYTNWAIGLSVADLTESLMRNMNRIHPVSTMAKGMYGIGDEVYLSLPCVLNSGGVGSVVNMTLTDEEVAQLQGSASTLWDIQKDLRDI</sequence>
<organism>
    <name type="scientific">Fundulus heteroclitus</name>
    <name type="common">Killifish</name>
    <name type="synonym">Mummichog</name>
    <dbReference type="NCBI Taxonomy" id="8078"/>
    <lineage>
        <taxon>Eukaryota</taxon>
        <taxon>Metazoa</taxon>
        <taxon>Chordata</taxon>
        <taxon>Craniata</taxon>
        <taxon>Vertebrata</taxon>
        <taxon>Euteleostomi</taxon>
        <taxon>Actinopterygii</taxon>
        <taxon>Neopterygii</taxon>
        <taxon>Teleostei</taxon>
        <taxon>Neoteleostei</taxon>
        <taxon>Acanthomorphata</taxon>
        <taxon>Ovalentaria</taxon>
        <taxon>Atherinomorphae</taxon>
        <taxon>Cyprinodontiformes</taxon>
        <taxon>Fundulidae</taxon>
        <taxon>Fundulus</taxon>
    </lineage>
</organism>
<reference key="1">
    <citation type="journal article" date="1993" name="Proc. Natl. Acad. Sci. U.S.A.">
        <title>Sequence analysis of teleost retina-specific lactate dehydrogenase C: evolutionary implications for the vertebrate lactate dehydrogenase gene family.</title>
        <authorList>
            <person name="Quattro J.M."/>
            <person name="Woods H.A."/>
            <person name="Powers D.A."/>
        </authorList>
    </citation>
    <scope>NUCLEOTIDE SEQUENCE [MRNA]</scope>
    <source>
        <tissue>Retina</tissue>
    </source>
</reference>
<feature type="initiator methionine" description="Removed" evidence="1">
    <location>
        <position position="1"/>
    </location>
</feature>
<feature type="chain" id="PRO_0000168484" description="L-lactate dehydrogenase C chain">
    <location>
        <begin position="2"/>
        <end position="334"/>
    </location>
</feature>
<feature type="active site" description="Proton acceptor" evidence="1">
    <location>
        <position position="194"/>
    </location>
</feature>
<feature type="binding site" evidence="1">
    <location>
        <begin position="30"/>
        <end position="58"/>
    </location>
    <ligand>
        <name>NAD(+)</name>
        <dbReference type="ChEBI" id="CHEBI:57540"/>
    </ligand>
</feature>
<feature type="binding site" evidence="1">
    <location>
        <position position="100"/>
    </location>
    <ligand>
        <name>NAD(+)</name>
        <dbReference type="ChEBI" id="CHEBI:57540"/>
    </ligand>
</feature>
<feature type="binding site" evidence="1">
    <location>
        <position position="107"/>
    </location>
    <ligand>
        <name>substrate</name>
    </ligand>
</feature>
<feature type="binding site" evidence="1">
    <location>
        <position position="139"/>
    </location>
    <ligand>
        <name>NAD(+)</name>
        <dbReference type="ChEBI" id="CHEBI:57540"/>
    </ligand>
</feature>
<feature type="binding site" evidence="1">
    <location>
        <position position="139"/>
    </location>
    <ligand>
        <name>substrate</name>
    </ligand>
</feature>
<feature type="binding site" evidence="1">
    <location>
        <position position="170"/>
    </location>
    <ligand>
        <name>substrate</name>
    </ligand>
</feature>
<feature type="binding site" evidence="1">
    <location>
        <position position="249"/>
    </location>
    <ligand>
        <name>substrate</name>
    </ligand>
</feature>
<evidence type="ECO:0000250" key="1"/>
<evidence type="ECO:0000305" key="2"/>
<comment type="catalytic activity">
    <reaction>
        <text>(S)-lactate + NAD(+) = pyruvate + NADH + H(+)</text>
        <dbReference type="Rhea" id="RHEA:23444"/>
        <dbReference type="ChEBI" id="CHEBI:15361"/>
        <dbReference type="ChEBI" id="CHEBI:15378"/>
        <dbReference type="ChEBI" id="CHEBI:16651"/>
        <dbReference type="ChEBI" id="CHEBI:57540"/>
        <dbReference type="ChEBI" id="CHEBI:57945"/>
        <dbReference type="EC" id="1.1.1.27"/>
    </reaction>
</comment>
<comment type="pathway">
    <text>Fermentation; pyruvate fermentation to lactate; (S)-lactate from pyruvate: step 1/1.</text>
</comment>
<comment type="subunit">
    <text>Homotetramer.</text>
</comment>
<comment type="subcellular location">
    <subcellularLocation>
        <location evidence="1">Cytoplasm</location>
    </subcellularLocation>
</comment>
<comment type="tissue specificity">
    <text>Eye and liver.</text>
</comment>
<comment type="similarity">
    <text evidence="2">Belongs to the LDH/MDH superfamily. LDH family.</text>
</comment>
<gene>
    <name type="primary">ldhc</name>
</gene>
<proteinExistence type="evidence at transcript level"/>
<dbReference type="EC" id="1.1.1.27"/>
<dbReference type="EMBL" id="L07336">
    <property type="status" value="NOT_ANNOTATED_CDS"/>
    <property type="molecule type" value="mRNA"/>
</dbReference>
<dbReference type="PIR" id="A47180">
    <property type="entry name" value="A47180"/>
</dbReference>
<dbReference type="SMR" id="Q06176"/>
<dbReference type="STRING" id="8078.ENSFHEP00000005780"/>
<dbReference type="UniPathway" id="UPA00554">
    <property type="reaction ID" value="UER00611"/>
</dbReference>
<dbReference type="Proteomes" id="UP000265000">
    <property type="component" value="Whole Genome Shotgun Assembly"/>
</dbReference>
<dbReference type="GO" id="GO:0005737">
    <property type="term" value="C:cytoplasm"/>
    <property type="evidence" value="ECO:0007669"/>
    <property type="project" value="UniProtKB-SubCell"/>
</dbReference>
<dbReference type="GO" id="GO:0004459">
    <property type="term" value="F:L-lactate dehydrogenase activity"/>
    <property type="evidence" value="ECO:0007669"/>
    <property type="project" value="UniProtKB-EC"/>
</dbReference>
<dbReference type="GO" id="GO:0006089">
    <property type="term" value="P:lactate metabolic process"/>
    <property type="evidence" value="ECO:0007669"/>
    <property type="project" value="TreeGrafter"/>
</dbReference>
<dbReference type="CDD" id="cd05293">
    <property type="entry name" value="LDH_1"/>
    <property type="match status" value="1"/>
</dbReference>
<dbReference type="FunFam" id="3.40.50.720:FF:000029">
    <property type="entry name" value="L-lactate dehydrogenase A chain"/>
    <property type="match status" value="1"/>
</dbReference>
<dbReference type="FunFam" id="3.90.110.10:FF:000003">
    <property type="entry name" value="L-lactate dehydrogenase A chain"/>
    <property type="match status" value="1"/>
</dbReference>
<dbReference type="Gene3D" id="3.90.110.10">
    <property type="entry name" value="Lactate dehydrogenase/glycoside hydrolase, family 4, C-terminal"/>
    <property type="match status" value="1"/>
</dbReference>
<dbReference type="Gene3D" id="3.40.50.720">
    <property type="entry name" value="NAD(P)-binding Rossmann-like Domain"/>
    <property type="match status" value="1"/>
</dbReference>
<dbReference type="HAMAP" id="MF_00488">
    <property type="entry name" value="Lactate_dehydrog"/>
    <property type="match status" value="1"/>
</dbReference>
<dbReference type="InterPro" id="IPR001557">
    <property type="entry name" value="L-lactate/malate_DH"/>
</dbReference>
<dbReference type="InterPro" id="IPR011304">
    <property type="entry name" value="L-lactate_DH"/>
</dbReference>
<dbReference type="InterPro" id="IPR018177">
    <property type="entry name" value="L-lactate_DH_AS"/>
</dbReference>
<dbReference type="InterPro" id="IPR022383">
    <property type="entry name" value="Lactate/malate_DH_C"/>
</dbReference>
<dbReference type="InterPro" id="IPR001236">
    <property type="entry name" value="Lactate/malate_DH_N"/>
</dbReference>
<dbReference type="InterPro" id="IPR015955">
    <property type="entry name" value="Lactate_DH/Glyco_Ohase_4_C"/>
</dbReference>
<dbReference type="InterPro" id="IPR036291">
    <property type="entry name" value="NAD(P)-bd_dom_sf"/>
</dbReference>
<dbReference type="NCBIfam" id="TIGR01771">
    <property type="entry name" value="L-LDH-NAD"/>
    <property type="match status" value="1"/>
</dbReference>
<dbReference type="PANTHER" id="PTHR43128">
    <property type="entry name" value="L-2-HYDROXYCARBOXYLATE DEHYDROGENASE (NAD(P)(+))"/>
    <property type="match status" value="1"/>
</dbReference>
<dbReference type="PANTHER" id="PTHR43128:SF2">
    <property type="entry name" value="L-LACTATE DEHYDROGENASE B CHAIN"/>
    <property type="match status" value="1"/>
</dbReference>
<dbReference type="Pfam" id="PF02866">
    <property type="entry name" value="Ldh_1_C"/>
    <property type="match status" value="1"/>
</dbReference>
<dbReference type="Pfam" id="PF00056">
    <property type="entry name" value="Ldh_1_N"/>
    <property type="match status" value="1"/>
</dbReference>
<dbReference type="PIRSF" id="PIRSF000102">
    <property type="entry name" value="Lac_mal_DH"/>
    <property type="match status" value="1"/>
</dbReference>
<dbReference type="PRINTS" id="PR00086">
    <property type="entry name" value="LLDHDRGNASE"/>
</dbReference>
<dbReference type="SUPFAM" id="SSF56327">
    <property type="entry name" value="LDH C-terminal domain-like"/>
    <property type="match status" value="1"/>
</dbReference>
<dbReference type="SUPFAM" id="SSF51735">
    <property type="entry name" value="NAD(P)-binding Rossmann-fold domains"/>
    <property type="match status" value="1"/>
</dbReference>
<dbReference type="PROSITE" id="PS00064">
    <property type="entry name" value="L_LDH"/>
    <property type="match status" value="1"/>
</dbReference>
<protein>
    <recommendedName>
        <fullName>L-lactate dehydrogenase C chain</fullName>
        <shortName>LDH-C</shortName>
        <ecNumber>1.1.1.27</ecNumber>
    </recommendedName>
</protein>